<feature type="chain" id="PRO_0000153717" description="Engulfment and cell motility protein 3">
    <location>
        <begin position="1"/>
        <end position="720"/>
    </location>
</feature>
<feature type="domain" description="ELMO" evidence="3">
    <location>
        <begin position="307"/>
        <end position="479"/>
    </location>
</feature>
<feature type="domain" description="PH">
    <location>
        <begin position="542"/>
        <end position="664"/>
    </location>
</feature>
<feature type="short sequence motif" description="SH3-binding">
    <location>
        <begin position="696"/>
        <end position="706"/>
    </location>
</feature>
<feature type="splice variant" id="VSP_037343" description="In isoform 2." evidence="4">
    <location>
        <begin position="1"/>
        <end position="113"/>
    </location>
</feature>
<proteinExistence type="evidence at protein level"/>
<gene>
    <name type="primary">Elmo3</name>
</gene>
<dbReference type="EMBL" id="AK037067">
    <property type="protein sequence ID" value="BAC29692.1"/>
    <property type="molecule type" value="mRNA"/>
</dbReference>
<dbReference type="EMBL" id="CH466525">
    <property type="protein sequence ID" value="EDL11267.1"/>
    <property type="molecule type" value="Genomic_DNA"/>
</dbReference>
<dbReference type="EMBL" id="BC058752">
    <property type="protein sequence ID" value="AAH58752.3"/>
    <property type="molecule type" value="mRNA"/>
</dbReference>
<dbReference type="EMBL" id="BC138887">
    <property type="protein sequence ID" value="AAI38888.1"/>
    <property type="molecule type" value="mRNA"/>
</dbReference>
<dbReference type="CCDS" id="CCDS22598.1">
    <molecule id="Q8BYZ7-1"/>
</dbReference>
<dbReference type="RefSeq" id="NP_766348.3">
    <molecule id="Q8BYZ7-1"/>
    <property type="nucleotide sequence ID" value="NM_172760.4"/>
</dbReference>
<dbReference type="SMR" id="Q8BYZ7"/>
<dbReference type="BioGRID" id="231558">
    <property type="interactions" value="1"/>
</dbReference>
<dbReference type="FunCoup" id="Q8BYZ7">
    <property type="interactions" value="27"/>
</dbReference>
<dbReference type="IntAct" id="Q8BYZ7">
    <property type="interactions" value="1"/>
</dbReference>
<dbReference type="STRING" id="10090.ENSMUSP00000105000"/>
<dbReference type="PhosphoSitePlus" id="Q8BYZ7"/>
<dbReference type="PaxDb" id="10090-ENSMUSP00000105000"/>
<dbReference type="PeptideAtlas" id="Q8BYZ7"/>
<dbReference type="ProteomicsDB" id="275742">
    <molecule id="Q8BYZ7-1"/>
</dbReference>
<dbReference type="ProteomicsDB" id="275743">
    <molecule id="Q8BYZ7-2"/>
</dbReference>
<dbReference type="Antibodypedia" id="15666">
    <property type="antibodies" value="202 antibodies from 29 providers"/>
</dbReference>
<dbReference type="Ensembl" id="ENSMUST00000109375.4">
    <molecule id="Q8BYZ7-1"/>
    <property type="protein sequence ID" value="ENSMUSP00000105000.3"/>
    <property type="gene ID" value="ENSMUSG00000014791.11"/>
</dbReference>
<dbReference type="GeneID" id="234683"/>
<dbReference type="KEGG" id="mmu:234683"/>
<dbReference type="UCSC" id="uc009ncn.2">
    <molecule id="Q8BYZ7-1"/>
    <property type="organism name" value="mouse"/>
</dbReference>
<dbReference type="AGR" id="MGI:2679007"/>
<dbReference type="CTD" id="79767"/>
<dbReference type="MGI" id="MGI:2679007">
    <property type="gene designation" value="Elmo3"/>
</dbReference>
<dbReference type="VEuPathDB" id="HostDB:ENSMUSG00000014791"/>
<dbReference type="eggNOG" id="KOG2999">
    <property type="taxonomic scope" value="Eukaryota"/>
</dbReference>
<dbReference type="GeneTree" id="ENSGT00940000159455"/>
<dbReference type="HOGENOM" id="CLU_023887_0_0_1"/>
<dbReference type="InParanoid" id="Q8BYZ7"/>
<dbReference type="OMA" id="KIAIQMM"/>
<dbReference type="OrthoDB" id="28413at2759"/>
<dbReference type="PhylomeDB" id="Q8BYZ7"/>
<dbReference type="TreeFam" id="TF312966"/>
<dbReference type="BioGRID-ORCS" id="234683">
    <property type="hits" value="6 hits in 76 CRISPR screens"/>
</dbReference>
<dbReference type="ChiTaRS" id="Elmo3">
    <property type="organism name" value="mouse"/>
</dbReference>
<dbReference type="PRO" id="PR:Q8BYZ7"/>
<dbReference type="Proteomes" id="UP000000589">
    <property type="component" value="Chromosome 8"/>
</dbReference>
<dbReference type="RNAct" id="Q8BYZ7">
    <property type="molecule type" value="protein"/>
</dbReference>
<dbReference type="Bgee" id="ENSMUSG00000014791">
    <property type="expression patterns" value="Expressed in spermatocyte and 204 other cell types or tissues"/>
</dbReference>
<dbReference type="ExpressionAtlas" id="Q8BYZ7">
    <property type="expression patterns" value="baseline and differential"/>
</dbReference>
<dbReference type="GO" id="GO:0005737">
    <property type="term" value="C:cytoplasm"/>
    <property type="evidence" value="ECO:0007669"/>
    <property type="project" value="UniProtKB-SubCell"/>
</dbReference>
<dbReference type="GO" id="GO:0017124">
    <property type="term" value="F:SH3 domain binding"/>
    <property type="evidence" value="ECO:0007669"/>
    <property type="project" value="UniProtKB-KW"/>
</dbReference>
<dbReference type="GO" id="GO:0006915">
    <property type="term" value="P:apoptotic process"/>
    <property type="evidence" value="ECO:0007669"/>
    <property type="project" value="UniProtKB-KW"/>
</dbReference>
<dbReference type="GO" id="GO:0006909">
    <property type="term" value="P:phagocytosis"/>
    <property type="evidence" value="ECO:0007669"/>
    <property type="project" value="UniProtKB-KW"/>
</dbReference>
<dbReference type="Gene3D" id="6.10.250.810">
    <property type="match status" value="1"/>
</dbReference>
<dbReference type="Gene3D" id="1.25.10.10">
    <property type="entry name" value="Leucine-rich Repeat Variant"/>
    <property type="match status" value="1"/>
</dbReference>
<dbReference type="Gene3D" id="2.30.29.30">
    <property type="entry name" value="Pleckstrin-homology domain (PH domain)/Phosphotyrosine-binding domain (PTB)"/>
    <property type="match status" value="1"/>
</dbReference>
<dbReference type="InterPro" id="IPR011989">
    <property type="entry name" value="ARM-like"/>
</dbReference>
<dbReference type="InterPro" id="IPR016024">
    <property type="entry name" value="ARM-type_fold"/>
</dbReference>
<dbReference type="InterPro" id="IPR024574">
    <property type="entry name" value="ELMO_ARM"/>
</dbReference>
<dbReference type="InterPro" id="IPR006816">
    <property type="entry name" value="ELMO_dom"/>
</dbReference>
<dbReference type="InterPro" id="IPR050868">
    <property type="entry name" value="ELMO_domain-containing"/>
</dbReference>
<dbReference type="InterPro" id="IPR011993">
    <property type="entry name" value="PH-like_dom_sf"/>
</dbReference>
<dbReference type="InterPro" id="IPR001849">
    <property type="entry name" value="PH_domain"/>
</dbReference>
<dbReference type="PANTHER" id="PTHR12771">
    <property type="entry name" value="ENGULFMENT AND CELL MOTILITY"/>
    <property type="match status" value="1"/>
</dbReference>
<dbReference type="PANTHER" id="PTHR12771:SF16">
    <property type="entry name" value="ENGULFMENT AND CELL MOTILITY PROTEIN 3"/>
    <property type="match status" value="1"/>
</dbReference>
<dbReference type="Pfam" id="PF11841">
    <property type="entry name" value="ELMO_ARM"/>
    <property type="match status" value="1"/>
</dbReference>
<dbReference type="Pfam" id="PF04727">
    <property type="entry name" value="ELMO_CED12"/>
    <property type="match status" value="1"/>
</dbReference>
<dbReference type="Pfam" id="PF16457">
    <property type="entry name" value="PH_12"/>
    <property type="match status" value="1"/>
</dbReference>
<dbReference type="SUPFAM" id="SSF48371">
    <property type="entry name" value="ARM repeat"/>
    <property type="match status" value="1"/>
</dbReference>
<dbReference type="SUPFAM" id="SSF50729">
    <property type="entry name" value="PH domain-like"/>
    <property type="match status" value="1"/>
</dbReference>
<dbReference type="PROSITE" id="PS51335">
    <property type="entry name" value="ELMO"/>
    <property type="match status" value="1"/>
</dbReference>
<organism>
    <name type="scientific">Mus musculus</name>
    <name type="common">Mouse</name>
    <dbReference type="NCBI Taxonomy" id="10090"/>
    <lineage>
        <taxon>Eukaryota</taxon>
        <taxon>Metazoa</taxon>
        <taxon>Chordata</taxon>
        <taxon>Craniata</taxon>
        <taxon>Vertebrata</taxon>
        <taxon>Euteleostomi</taxon>
        <taxon>Mammalia</taxon>
        <taxon>Eutheria</taxon>
        <taxon>Euarchontoglires</taxon>
        <taxon>Glires</taxon>
        <taxon>Rodentia</taxon>
        <taxon>Myomorpha</taxon>
        <taxon>Muroidea</taxon>
        <taxon>Muridae</taxon>
        <taxon>Murinae</taxon>
        <taxon>Mus</taxon>
        <taxon>Mus</taxon>
    </lineage>
</organism>
<accession>Q8BYZ7</accession>
<accession>Q6PDE4</accession>
<protein>
    <recommendedName>
        <fullName>Engulfment and cell motility protein 3</fullName>
    </recommendedName>
</protein>
<evidence type="ECO:0000250" key="1"/>
<evidence type="ECO:0000250" key="2">
    <source>
        <dbReference type="UniProtKB" id="Q96BJ8"/>
    </source>
</evidence>
<evidence type="ECO:0000255" key="3">
    <source>
        <dbReference type="PROSITE-ProRule" id="PRU00664"/>
    </source>
</evidence>
<evidence type="ECO:0000303" key="4">
    <source>
    </source>
</evidence>
<keyword id="KW-0025">Alternative splicing</keyword>
<keyword id="KW-0053">Apoptosis</keyword>
<keyword id="KW-0963">Cytoplasm</keyword>
<keyword id="KW-0903">Direct protein sequencing</keyword>
<keyword id="KW-0581">Phagocytosis</keyword>
<keyword id="KW-1185">Reference proteome</keyword>
<keyword id="KW-0729">SH3-binding</keyword>
<sequence length="720" mass="81758">MAPPRNVVKIAVQMSDAIPQLIQLDQAKPLATVLKEVCDAWSLTHPEHYALQFADGHRKYITENNRLEIKNGSILCLSTAPDLKAQQLLGRLQNTSREGCCEVLRNLVLLASDMTFAQEVISRDGLQKLSTIIENGDDLGEMLALGLRAFLELMEHGVVSWETLSISFVRKVISYVNMNLMDASVQPLALRLLESVTLSSPALGQLVKSEVPLDRLLVHLQVMNHQLQTKAMALLTALLQGASPTERKEMLDHLWKKNLRQFIYKNIIHSATPMGDEMAHHLYVLQALTLGLLEPRMRTPLDPYSQEQRDQLQALRQAAFEPEGESLGTGLSADRRRSLCVREFRKLGFSNSNPAQDLERVPPGLLALDNMLYFSRHAPSAYSRFVLENSSREDKHECPFARSSIQLTALLCELLRVGEPCSETAQDFSPMFFSQDHSFHELFCVAIQLLNKTWKEMRATQEDFDKVMQVVREQLARTLALKPTSLELFRTKVNALTYGEVLRLRQTERLHQEGTLAPPILELREKLKPELMGLIRQQRLLRLCEGMLFRKISSRRRQDKLWFCCLSPNHKVLQYGDVEEGAKPPTLESLPEQLPVADIRALLMGKDCPHVREKGSGKQNKDLYELAFSISYDHGEEEAYLNFIAPSKRDFYLWTDGLSALLGSTMGSELTRLDLEQLLTMETKLRLLELENVPIPEQPPPVPPPPTNFNFCYDYSITEP</sequence>
<comment type="function">
    <text evidence="1">Involved in cytoskeletal rearrangements required for phagocytosis of apoptotic cells and cell motility. Acts in association with DOCK1 and CRK. Was initially proposed to be required in complex with DOCK1 to activate Rac Rho small GTPases. May enhance the guanine nucleotide exchange factor (GEF) activity of DOCK1 (By similarity).</text>
</comment>
<comment type="subunit">
    <text evidence="1 2">Probably interacts directly with the SH3-domain of DOCK1 via its SH3-binding site. Part of a complex with DOCK1 and RAC1 (By similarity). Interacts with ADGRB3 (By similarity).</text>
</comment>
<comment type="interaction">
    <interactant intactId="EBI-646035">
        <id>Q8BYZ7</id>
    </interactant>
    <interactant intactId="EBI-646023">
        <id>Q8BUR4</id>
        <label>Dock1</label>
    </interactant>
    <organismsDiffer>false</organismsDiffer>
    <experiments>4</experiments>
</comment>
<comment type="subcellular location">
    <subcellularLocation>
        <location evidence="1">Cytoplasm</location>
    </subcellularLocation>
</comment>
<comment type="alternative products">
    <event type="alternative splicing"/>
    <isoform>
        <id>Q8BYZ7-1</id>
        <name>1</name>
        <sequence type="displayed"/>
    </isoform>
    <isoform>
        <id>Q8BYZ7-2</id>
        <name>2</name>
        <sequence type="described" ref="VSP_037343"/>
    </isoform>
</comment>
<name>ELMO3_MOUSE</name>
<reference key="1">
    <citation type="journal article" date="2005" name="Science">
        <title>The transcriptional landscape of the mammalian genome.</title>
        <authorList>
            <person name="Carninci P."/>
            <person name="Kasukawa T."/>
            <person name="Katayama S."/>
            <person name="Gough J."/>
            <person name="Frith M.C."/>
            <person name="Maeda N."/>
            <person name="Oyama R."/>
            <person name="Ravasi T."/>
            <person name="Lenhard B."/>
            <person name="Wells C."/>
            <person name="Kodzius R."/>
            <person name="Shimokawa K."/>
            <person name="Bajic V.B."/>
            <person name="Brenner S.E."/>
            <person name="Batalov S."/>
            <person name="Forrest A.R."/>
            <person name="Zavolan M."/>
            <person name="Davis M.J."/>
            <person name="Wilming L.G."/>
            <person name="Aidinis V."/>
            <person name="Allen J.E."/>
            <person name="Ambesi-Impiombato A."/>
            <person name="Apweiler R."/>
            <person name="Aturaliya R.N."/>
            <person name="Bailey T.L."/>
            <person name="Bansal M."/>
            <person name="Baxter L."/>
            <person name="Beisel K.W."/>
            <person name="Bersano T."/>
            <person name="Bono H."/>
            <person name="Chalk A.M."/>
            <person name="Chiu K.P."/>
            <person name="Choudhary V."/>
            <person name="Christoffels A."/>
            <person name="Clutterbuck D.R."/>
            <person name="Crowe M.L."/>
            <person name="Dalla E."/>
            <person name="Dalrymple B.P."/>
            <person name="de Bono B."/>
            <person name="Della Gatta G."/>
            <person name="di Bernardo D."/>
            <person name="Down T."/>
            <person name="Engstrom P."/>
            <person name="Fagiolini M."/>
            <person name="Faulkner G."/>
            <person name="Fletcher C.F."/>
            <person name="Fukushima T."/>
            <person name="Furuno M."/>
            <person name="Futaki S."/>
            <person name="Gariboldi M."/>
            <person name="Georgii-Hemming P."/>
            <person name="Gingeras T.R."/>
            <person name="Gojobori T."/>
            <person name="Green R.E."/>
            <person name="Gustincich S."/>
            <person name="Harbers M."/>
            <person name="Hayashi Y."/>
            <person name="Hensch T.K."/>
            <person name="Hirokawa N."/>
            <person name="Hill D."/>
            <person name="Huminiecki L."/>
            <person name="Iacono M."/>
            <person name="Ikeo K."/>
            <person name="Iwama A."/>
            <person name="Ishikawa T."/>
            <person name="Jakt M."/>
            <person name="Kanapin A."/>
            <person name="Katoh M."/>
            <person name="Kawasawa Y."/>
            <person name="Kelso J."/>
            <person name="Kitamura H."/>
            <person name="Kitano H."/>
            <person name="Kollias G."/>
            <person name="Krishnan S.P."/>
            <person name="Kruger A."/>
            <person name="Kummerfeld S.K."/>
            <person name="Kurochkin I.V."/>
            <person name="Lareau L.F."/>
            <person name="Lazarevic D."/>
            <person name="Lipovich L."/>
            <person name="Liu J."/>
            <person name="Liuni S."/>
            <person name="McWilliam S."/>
            <person name="Madan Babu M."/>
            <person name="Madera M."/>
            <person name="Marchionni L."/>
            <person name="Matsuda H."/>
            <person name="Matsuzawa S."/>
            <person name="Miki H."/>
            <person name="Mignone F."/>
            <person name="Miyake S."/>
            <person name="Morris K."/>
            <person name="Mottagui-Tabar S."/>
            <person name="Mulder N."/>
            <person name="Nakano N."/>
            <person name="Nakauchi H."/>
            <person name="Ng P."/>
            <person name="Nilsson R."/>
            <person name="Nishiguchi S."/>
            <person name="Nishikawa S."/>
            <person name="Nori F."/>
            <person name="Ohara O."/>
            <person name="Okazaki Y."/>
            <person name="Orlando V."/>
            <person name="Pang K.C."/>
            <person name="Pavan W.J."/>
            <person name="Pavesi G."/>
            <person name="Pesole G."/>
            <person name="Petrovsky N."/>
            <person name="Piazza S."/>
            <person name="Reed J."/>
            <person name="Reid J.F."/>
            <person name="Ring B.Z."/>
            <person name="Ringwald M."/>
            <person name="Rost B."/>
            <person name="Ruan Y."/>
            <person name="Salzberg S.L."/>
            <person name="Sandelin A."/>
            <person name="Schneider C."/>
            <person name="Schoenbach C."/>
            <person name="Sekiguchi K."/>
            <person name="Semple C.A."/>
            <person name="Seno S."/>
            <person name="Sessa L."/>
            <person name="Sheng Y."/>
            <person name="Shibata Y."/>
            <person name="Shimada H."/>
            <person name="Shimada K."/>
            <person name="Silva D."/>
            <person name="Sinclair B."/>
            <person name="Sperling S."/>
            <person name="Stupka E."/>
            <person name="Sugiura K."/>
            <person name="Sultana R."/>
            <person name="Takenaka Y."/>
            <person name="Taki K."/>
            <person name="Tammoja K."/>
            <person name="Tan S.L."/>
            <person name="Tang S."/>
            <person name="Taylor M.S."/>
            <person name="Tegner J."/>
            <person name="Teichmann S.A."/>
            <person name="Ueda H.R."/>
            <person name="van Nimwegen E."/>
            <person name="Verardo R."/>
            <person name="Wei C.L."/>
            <person name="Yagi K."/>
            <person name="Yamanishi H."/>
            <person name="Zabarovsky E."/>
            <person name="Zhu S."/>
            <person name="Zimmer A."/>
            <person name="Hide W."/>
            <person name="Bult C."/>
            <person name="Grimmond S.M."/>
            <person name="Teasdale R.D."/>
            <person name="Liu E.T."/>
            <person name="Brusic V."/>
            <person name="Quackenbush J."/>
            <person name="Wahlestedt C."/>
            <person name="Mattick J.S."/>
            <person name="Hume D.A."/>
            <person name="Kai C."/>
            <person name="Sasaki D."/>
            <person name="Tomaru Y."/>
            <person name="Fukuda S."/>
            <person name="Kanamori-Katayama M."/>
            <person name="Suzuki M."/>
            <person name="Aoki J."/>
            <person name="Arakawa T."/>
            <person name="Iida J."/>
            <person name="Imamura K."/>
            <person name="Itoh M."/>
            <person name="Kato T."/>
            <person name="Kawaji H."/>
            <person name="Kawagashira N."/>
            <person name="Kawashima T."/>
            <person name="Kojima M."/>
            <person name="Kondo S."/>
            <person name="Konno H."/>
            <person name="Nakano K."/>
            <person name="Ninomiya N."/>
            <person name="Nishio T."/>
            <person name="Okada M."/>
            <person name="Plessy C."/>
            <person name="Shibata K."/>
            <person name="Shiraki T."/>
            <person name="Suzuki S."/>
            <person name="Tagami M."/>
            <person name="Waki K."/>
            <person name="Watahiki A."/>
            <person name="Okamura-Oho Y."/>
            <person name="Suzuki H."/>
            <person name="Kawai J."/>
            <person name="Hayashizaki Y."/>
        </authorList>
    </citation>
    <scope>NUCLEOTIDE SEQUENCE [LARGE SCALE MRNA] (ISOFORM 2)</scope>
    <source>
        <strain>C57BL/6J</strain>
        <tissue>Vagina</tissue>
    </source>
</reference>
<reference key="2">
    <citation type="submission" date="2005-07" db="EMBL/GenBank/DDBJ databases">
        <authorList>
            <person name="Mural R.J."/>
            <person name="Adams M.D."/>
            <person name="Myers E.W."/>
            <person name="Smith H.O."/>
            <person name="Venter J.C."/>
        </authorList>
    </citation>
    <scope>NUCLEOTIDE SEQUENCE [LARGE SCALE GENOMIC DNA] (ISOFORM 1)</scope>
</reference>
<reference key="3">
    <citation type="journal article" date="2004" name="Genome Res.">
        <title>The status, quality, and expansion of the NIH full-length cDNA project: the Mammalian Gene Collection (MGC).</title>
        <authorList>
            <consortium name="The MGC Project Team"/>
        </authorList>
    </citation>
    <scope>NUCLEOTIDE SEQUENCE [LARGE SCALE MRNA] (ISOFORM 1)</scope>
    <source>
        <strain>FVB/N-3</strain>
        <tissue>Mammary tumor</tissue>
    </source>
</reference>
<reference key="4">
    <citation type="submission" date="2009-01" db="UniProtKB">
        <authorList>
            <person name="Lubec G."/>
            <person name="Sunyer B."/>
            <person name="Chen W.-Q."/>
        </authorList>
    </citation>
    <scope>PROTEIN SEQUENCE OF 607-612</scope>
    <scope>IDENTIFICATION BY MASS SPECTROMETRY</scope>
    <source>
        <strain>OF1</strain>
        <tissue>Hippocampus</tissue>
    </source>
</reference>
<reference key="5">
    <citation type="journal article" date="2010" name="Cell">
        <title>A tissue-specific atlas of mouse protein phosphorylation and expression.</title>
        <authorList>
            <person name="Huttlin E.L."/>
            <person name="Jedrychowski M.P."/>
            <person name="Elias J.E."/>
            <person name="Goswami T."/>
            <person name="Rad R."/>
            <person name="Beausoleil S.A."/>
            <person name="Villen J."/>
            <person name="Haas W."/>
            <person name="Sowa M.E."/>
            <person name="Gygi S.P."/>
        </authorList>
    </citation>
    <scope>IDENTIFICATION BY MASS SPECTROMETRY [LARGE SCALE ANALYSIS]</scope>
    <source>
        <tissue>Kidney</tissue>
        <tissue>Liver</tissue>
        <tissue>Lung</tissue>
        <tissue>Pancreas</tissue>
    </source>
</reference>